<name>RS20_YEAST</name>
<organism>
    <name type="scientific">Saccharomyces cerevisiae (strain ATCC 204508 / S288c)</name>
    <name type="common">Baker's yeast</name>
    <dbReference type="NCBI Taxonomy" id="559292"/>
    <lineage>
        <taxon>Eukaryota</taxon>
        <taxon>Fungi</taxon>
        <taxon>Dikarya</taxon>
        <taxon>Ascomycota</taxon>
        <taxon>Saccharomycotina</taxon>
        <taxon>Saccharomycetes</taxon>
        <taxon>Saccharomycetales</taxon>
        <taxon>Saccharomycetaceae</taxon>
        <taxon>Saccharomyces</taxon>
    </lineage>
</organism>
<accession>P38701</accession>
<accession>D3DKP7</accession>
<proteinExistence type="evidence at protein level"/>
<protein>
    <recommendedName>
        <fullName evidence="8">Small ribosomal subunit protein uS10</fullName>
    </recommendedName>
    <alternativeName>
        <fullName evidence="10">40S ribosomal protein S20</fullName>
    </alternativeName>
</protein>
<sequence length="121" mass="13907">MSDFQKEKVEEQEQQQQQIIKIRITLTSTKVKQLENVSSNIVKNAEQHNLVKKGPVRLPTKVLKISTRKTPNGEGSKTWETYEMRIHKRYIDLEAPVQIVKRITQITIEPGVDVEVVVASN</sequence>
<dbReference type="EMBL" id="Z29089">
    <property type="protein sequence ID" value="CAA82331.1"/>
    <property type="molecule type" value="Genomic_DNA"/>
</dbReference>
<dbReference type="EMBL" id="U11582">
    <property type="protein sequence ID" value="AAB65068.1"/>
    <property type="molecule type" value="Genomic_DNA"/>
</dbReference>
<dbReference type="EMBL" id="BK006934">
    <property type="protein sequence ID" value="DAA06671.1"/>
    <property type="molecule type" value="Genomic_DNA"/>
</dbReference>
<dbReference type="PIR" id="S46829">
    <property type="entry name" value="S46829"/>
</dbReference>
<dbReference type="RefSeq" id="NP_011848.1">
    <property type="nucleotide sequence ID" value="NM_001179095.1"/>
</dbReference>
<dbReference type="PDB" id="3J6X">
    <property type="method" value="EM"/>
    <property type="resolution" value="6.10 A"/>
    <property type="chains" value="20=1-121"/>
</dbReference>
<dbReference type="PDB" id="3J6Y">
    <property type="method" value="EM"/>
    <property type="resolution" value="6.10 A"/>
    <property type="chains" value="20=1-121"/>
</dbReference>
<dbReference type="PDB" id="3J77">
    <property type="method" value="EM"/>
    <property type="resolution" value="6.20 A"/>
    <property type="chains" value="20=1-121"/>
</dbReference>
<dbReference type="PDB" id="3J78">
    <property type="method" value="EM"/>
    <property type="resolution" value="6.30 A"/>
    <property type="chains" value="20=1-121"/>
</dbReference>
<dbReference type="PDB" id="4U3M">
    <property type="method" value="X-ray"/>
    <property type="resolution" value="3.00 A"/>
    <property type="chains" value="D0/d0=2-121"/>
</dbReference>
<dbReference type="PDB" id="4U3N">
    <property type="method" value="X-ray"/>
    <property type="resolution" value="3.20 A"/>
    <property type="chains" value="D0/d0=2-121"/>
</dbReference>
<dbReference type="PDB" id="4U3U">
    <property type="method" value="X-ray"/>
    <property type="resolution" value="2.90 A"/>
    <property type="chains" value="D0/d0=2-121"/>
</dbReference>
<dbReference type="PDB" id="4U4N">
    <property type="method" value="X-ray"/>
    <property type="resolution" value="3.10 A"/>
    <property type="chains" value="D0/d0=2-121"/>
</dbReference>
<dbReference type="PDB" id="4U4O">
    <property type="method" value="X-ray"/>
    <property type="resolution" value="3.60 A"/>
    <property type="chains" value="D0/d0=2-121"/>
</dbReference>
<dbReference type="PDB" id="4U4Q">
    <property type="method" value="X-ray"/>
    <property type="resolution" value="3.00 A"/>
    <property type="chains" value="D0/d0=2-121"/>
</dbReference>
<dbReference type="PDB" id="4U4R">
    <property type="method" value="X-ray"/>
    <property type="resolution" value="2.80 A"/>
    <property type="chains" value="D0/d0=2-121"/>
</dbReference>
<dbReference type="PDB" id="4U4U">
    <property type="method" value="X-ray"/>
    <property type="resolution" value="3.00 A"/>
    <property type="chains" value="D0/d0=2-121"/>
</dbReference>
<dbReference type="PDB" id="4U4Y">
    <property type="method" value="X-ray"/>
    <property type="resolution" value="3.20 A"/>
    <property type="chains" value="D0/d0=2-121"/>
</dbReference>
<dbReference type="PDB" id="4U4Z">
    <property type="method" value="X-ray"/>
    <property type="resolution" value="3.10 A"/>
    <property type="chains" value="D0/d0=2-121"/>
</dbReference>
<dbReference type="PDB" id="4U50">
    <property type="method" value="X-ray"/>
    <property type="resolution" value="3.20 A"/>
    <property type="chains" value="D0/d0=2-121"/>
</dbReference>
<dbReference type="PDB" id="4U51">
    <property type="method" value="X-ray"/>
    <property type="resolution" value="3.20 A"/>
    <property type="chains" value="D0/d0=2-121"/>
</dbReference>
<dbReference type="PDB" id="4U52">
    <property type="method" value="X-ray"/>
    <property type="resolution" value="3.00 A"/>
    <property type="chains" value="D0/d0=2-121"/>
</dbReference>
<dbReference type="PDB" id="4U53">
    <property type="method" value="X-ray"/>
    <property type="resolution" value="3.30 A"/>
    <property type="chains" value="D0/d0=2-121"/>
</dbReference>
<dbReference type="PDB" id="4U55">
    <property type="method" value="X-ray"/>
    <property type="resolution" value="3.20 A"/>
    <property type="chains" value="D0/d0=2-121"/>
</dbReference>
<dbReference type="PDB" id="4U56">
    <property type="method" value="X-ray"/>
    <property type="resolution" value="3.45 A"/>
    <property type="chains" value="D0/d0=2-121"/>
</dbReference>
<dbReference type="PDB" id="4U6F">
    <property type="method" value="X-ray"/>
    <property type="resolution" value="3.10 A"/>
    <property type="chains" value="D0/d0=2-121"/>
</dbReference>
<dbReference type="PDB" id="4V4B">
    <property type="method" value="EM"/>
    <property type="resolution" value="11.70 A"/>
    <property type="chains" value="AJ=21-117"/>
</dbReference>
<dbReference type="PDB" id="4V5Z">
    <property type="method" value="EM"/>
    <property type="resolution" value="8.70 A"/>
    <property type="chains" value="Aj=19-119"/>
</dbReference>
<dbReference type="PDB" id="4V6I">
    <property type="method" value="EM"/>
    <property type="resolution" value="8.80 A"/>
    <property type="chains" value="AJ=1-121"/>
</dbReference>
<dbReference type="PDB" id="4V7R">
    <property type="method" value="X-ray"/>
    <property type="resolution" value="4.00 A"/>
    <property type="chains" value="AN/CN=1-121"/>
</dbReference>
<dbReference type="PDB" id="4V88">
    <property type="method" value="X-ray"/>
    <property type="resolution" value="3.00 A"/>
    <property type="chains" value="AU/CU=1-121"/>
</dbReference>
<dbReference type="PDB" id="4V8Y">
    <property type="method" value="EM"/>
    <property type="resolution" value="4.30 A"/>
    <property type="chains" value="AU=1-121"/>
</dbReference>
<dbReference type="PDB" id="4V8Z">
    <property type="method" value="EM"/>
    <property type="resolution" value="6.60 A"/>
    <property type="chains" value="AU=1-121"/>
</dbReference>
<dbReference type="PDB" id="4V92">
    <property type="method" value="EM"/>
    <property type="resolution" value="3.70 A"/>
    <property type="chains" value="U=17-120"/>
</dbReference>
<dbReference type="PDB" id="5DAT">
    <property type="method" value="X-ray"/>
    <property type="resolution" value="3.15 A"/>
    <property type="chains" value="D0/d0=2-121"/>
</dbReference>
<dbReference type="PDB" id="5DC3">
    <property type="method" value="X-ray"/>
    <property type="resolution" value="3.25 A"/>
    <property type="chains" value="D0/d0=2-121"/>
</dbReference>
<dbReference type="PDB" id="5DGE">
    <property type="method" value="X-ray"/>
    <property type="resolution" value="3.45 A"/>
    <property type="chains" value="D0/d0=2-121"/>
</dbReference>
<dbReference type="PDB" id="5DGF">
    <property type="method" value="X-ray"/>
    <property type="resolution" value="3.30 A"/>
    <property type="chains" value="D0/d0=2-121"/>
</dbReference>
<dbReference type="PDB" id="5DGV">
    <property type="method" value="X-ray"/>
    <property type="resolution" value="3.10 A"/>
    <property type="chains" value="D0/d0=2-121"/>
</dbReference>
<dbReference type="PDB" id="5FCI">
    <property type="method" value="X-ray"/>
    <property type="resolution" value="3.40 A"/>
    <property type="chains" value="D0/d0=2-121"/>
</dbReference>
<dbReference type="PDB" id="5FCJ">
    <property type="method" value="X-ray"/>
    <property type="resolution" value="3.10 A"/>
    <property type="chains" value="D0/d0=2-121"/>
</dbReference>
<dbReference type="PDB" id="5I4L">
    <property type="method" value="X-ray"/>
    <property type="resolution" value="3.10 A"/>
    <property type="chains" value="D0/d0=12-121"/>
</dbReference>
<dbReference type="PDB" id="5JUO">
    <property type="method" value="EM"/>
    <property type="resolution" value="4.00 A"/>
    <property type="chains" value="RB=1-121"/>
</dbReference>
<dbReference type="PDB" id="5JUP">
    <property type="method" value="EM"/>
    <property type="resolution" value="3.50 A"/>
    <property type="chains" value="RB=1-121"/>
</dbReference>
<dbReference type="PDB" id="5JUS">
    <property type="method" value="EM"/>
    <property type="resolution" value="4.20 A"/>
    <property type="chains" value="RB=1-121"/>
</dbReference>
<dbReference type="PDB" id="5JUT">
    <property type="method" value="EM"/>
    <property type="resolution" value="4.00 A"/>
    <property type="chains" value="RB=1-121"/>
</dbReference>
<dbReference type="PDB" id="5JUU">
    <property type="method" value="EM"/>
    <property type="resolution" value="4.00 A"/>
    <property type="chains" value="RB=1-121"/>
</dbReference>
<dbReference type="PDB" id="5LYB">
    <property type="method" value="X-ray"/>
    <property type="resolution" value="3.25 A"/>
    <property type="chains" value="D0/d0=12-121"/>
</dbReference>
<dbReference type="PDB" id="5M1J">
    <property type="method" value="EM"/>
    <property type="resolution" value="3.30 A"/>
    <property type="chains" value="U2=15-121"/>
</dbReference>
<dbReference type="PDB" id="5MC6">
    <property type="method" value="EM"/>
    <property type="resolution" value="3.80 A"/>
    <property type="chains" value="J=1-121"/>
</dbReference>
<dbReference type="PDB" id="5MEI">
    <property type="method" value="X-ray"/>
    <property type="resolution" value="3.50 A"/>
    <property type="chains" value="V/d0=12-121"/>
</dbReference>
<dbReference type="PDB" id="5NDG">
    <property type="method" value="X-ray"/>
    <property type="resolution" value="3.70 A"/>
    <property type="chains" value="D0/d0=15-121"/>
</dbReference>
<dbReference type="PDB" id="5NDV">
    <property type="method" value="X-ray"/>
    <property type="resolution" value="3.30 A"/>
    <property type="chains" value="D0/d0=13-121"/>
</dbReference>
<dbReference type="PDB" id="5NDW">
    <property type="method" value="X-ray"/>
    <property type="resolution" value="3.70 A"/>
    <property type="chains" value="D0/d0=15-121"/>
</dbReference>
<dbReference type="PDB" id="5OBM">
    <property type="method" value="X-ray"/>
    <property type="resolution" value="3.40 A"/>
    <property type="chains" value="D0/d0=12-121"/>
</dbReference>
<dbReference type="PDB" id="5ON6">
    <property type="method" value="X-ray"/>
    <property type="resolution" value="3.10 A"/>
    <property type="chains" value="V/d0=12-121"/>
</dbReference>
<dbReference type="PDB" id="5TBW">
    <property type="method" value="X-ray"/>
    <property type="resolution" value="3.00 A"/>
    <property type="chains" value="V/d0=12-121"/>
</dbReference>
<dbReference type="PDB" id="5TGA">
    <property type="method" value="X-ray"/>
    <property type="resolution" value="3.30 A"/>
    <property type="chains" value="D0/d0=12-121"/>
</dbReference>
<dbReference type="PDB" id="5TGM">
    <property type="method" value="X-ray"/>
    <property type="resolution" value="3.50 A"/>
    <property type="chains" value="D0/d0=12-121"/>
</dbReference>
<dbReference type="PDB" id="6FAI">
    <property type="method" value="EM"/>
    <property type="resolution" value="3.40 A"/>
    <property type="chains" value="U=1-121"/>
</dbReference>
<dbReference type="PDB" id="6GQ1">
    <property type="method" value="EM"/>
    <property type="resolution" value="4.40 A"/>
    <property type="chains" value="AK=15-121"/>
</dbReference>
<dbReference type="PDB" id="6GQB">
    <property type="method" value="EM"/>
    <property type="resolution" value="3.90 A"/>
    <property type="chains" value="AK=15-121"/>
</dbReference>
<dbReference type="PDB" id="6GQV">
    <property type="method" value="EM"/>
    <property type="resolution" value="4.00 A"/>
    <property type="chains" value="AK=15-121"/>
</dbReference>
<dbReference type="PDB" id="6HHQ">
    <property type="method" value="X-ray"/>
    <property type="resolution" value="3.10 A"/>
    <property type="chains" value="V/d0=1-121"/>
</dbReference>
<dbReference type="PDB" id="6I7O">
    <property type="method" value="EM"/>
    <property type="resolution" value="5.30 A"/>
    <property type="chains" value="J/Jb=19-119"/>
</dbReference>
<dbReference type="PDB" id="6Q8Y">
    <property type="method" value="EM"/>
    <property type="resolution" value="3.10 A"/>
    <property type="chains" value="J=15-121"/>
</dbReference>
<dbReference type="PDB" id="6RBD">
    <property type="method" value="EM"/>
    <property type="resolution" value="3.47 A"/>
    <property type="chains" value="U=1-121"/>
</dbReference>
<dbReference type="PDB" id="6RBE">
    <property type="method" value="EM"/>
    <property type="resolution" value="3.80 A"/>
    <property type="chains" value="U=1-121"/>
</dbReference>
<dbReference type="PDB" id="6S47">
    <property type="method" value="EM"/>
    <property type="resolution" value="3.28 A"/>
    <property type="chains" value="BV=2-121"/>
</dbReference>
<dbReference type="PDB" id="6SNT">
    <property type="method" value="EM"/>
    <property type="resolution" value="2.80 A"/>
    <property type="chains" value="U=1-121"/>
</dbReference>
<dbReference type="PDB" id="6SV4">
    <property type="method" value="EM"/>
    <property type="resolution" value="3.30 A"/>
    <property type="chains" value="J/Jb/Jc=1-121"/>
</dbReference>
<dbReference type="PDB" id="6T4Q">
    <property type="method" value="EM"/>
    <property type="resolution" value="2.60 A"/>
    <property type="chains" value="SU=20-119"/>
</dbReference>
<dbReference type="PDB" id="6T7I">
    <property type="method" value="EM"/>
    <property type="resolution" value="3.20 A"/>
    <property type="chains" value="SU=1-121"/>
</dbReference>
<dbReference type="PDB" id="6T7T">
    <property type="method" value="EM"/>
    <property type="resolution" value="3.10 A"/>
    <property type="chains" value="SU=1-121"/>
</dbReference>
<dbReference type="PDB" id="6T83">
    <property type="method" value="EM"/>
    <property type="resolution" value="4.00 A"/>
    <property type="chains" value="Ub/v=1-121"/>
</dbReference>
<dbReference type="PDB" id="6TB3">
    <property type="method" value="EM"/>
    <property type="resolution" value="2.80 A"/>
    <property type="chains" value="J=20-119"/>
</dbReference>
<dbReference type="PDB" id="6TNU">
    <property type="method" value="EM"/>
    <property type="resolution" value="3.10 A"/>
    <property type="chains" value="J=20-119"/>
</dbReference>
<dbReference type="PDB" id="6WDR">
    <property type="method" value="EM"/>
    <property type="resolution" value="3.70 A"/>
    <property type="chains" value="U=19-121"/>
</dbReference>
<dbReference type="PDB" id="6WOO">
    <property type="method" value="EM"/>
    <property type="resolution" value="2.90 A"/>
    <property type="chains" value="UU=15-120"/>
</dbReference>
<dbReference type="PDB" id="6Y7C">
    <property type="method" value="EM"/>
    <property type="resolution" value="3.80 A"/>
    <property type="chains" value="U=1-121"/>
</dbReference>
<dbReference type="PDB" id="6Z6J">
    <property type="method" value="EM"/>
    <property type="resolution" value="3.40 A"/>
    <property type="chains" value="SU=1-121"/>
</dbReference>
<dbReference type="PDB" id="6Z6K">
    <property type="method" value="EM"/>
    <property type="resolution" value="3.40 A"/>
    <property type="chains" value="SU=1-121"/>
</dbReference>
<dbReference type="PDB" id="6ZCE">
    <property type="method" value="EM"/>
    <property type="resolution" value="5.30 A"/>
    <property type="chains" value="V=1-121"/>
</dbReference>
<dbReference type="PDB" id="6ZU9">
    <property type="method" value="EM"/>
    <property type="resolution" value="6.20 A"/>
    <property type="chains" value="L=1-121"/>
</dbReference>
<dbReference type="PDB" id="6ZVI">
    <property type="method" value="EM"/>
    <property type="resolution" value="3.00 A"/>
    <property type="chains" value="C=19-119"/>
</dbReference>
<dbReference type="PDB" id="7A1G">
    <property type="method" value="EM"/>
    <property type="resolution" value="3.00 A"/>
    <property type="chains" value="K=20-119"/>
</dbReference>
<dbReference type="PDB" id="7B7D">
    <property type="method" value="EM"/>
    <property type="resolution" value="3.30 A"/>
    <property type="chains" value="J=20-119"/>
</dbReference>
<dbReference type="PDB" id="7MPI">
    <property type="method" value="EM"/>
    <property type="resolution" value="3.05 A"/>
    <property type="chains" value="BU=15-121"/>
</dbReference>
<dbReference type="PDB" id="7MPJ">
    <property type="method" value="EM"/>
    <property type="resolution" value="2.70 A"/>
    <property type="chains" value="BU=15-121"/>
</dbReference>
<dbReference type="PDB" id="7N8B">
    <property type="method" value="EM"/>
    <property type="resolution" value="3.05 A"/>
    <property type="chains" value="BU=15-121"/>
</dbReference>
<dbReference type="PDB" id="7NRC">
    <property type="method" value="EM"/>
    <property type="resolution" value="3.90 A"/>
    <property type="chains" value="SJ=20-119"/>
</dbReference>
<dbReference type="PDB" id="7NRD">
    <property type="method" value="EM"/>
    <property type="resolution" value="4.36 A"/>
    <property type="chains" value="SJ=19-119"/>
</dbReference>
<dbReference type="PDB" id="7ZPQ">
    <property type="method" value="EM"/>
    <property type="resolution" value="3.47 A"/>
    <property type="chains" value="AU=20-119"/>
</dbReference>
<dbReference type="PDB" id="7ZRS">
    <property type="method" value="EM"/>
    <property type="resolution" value="4.80 A"/>
    <property type="chains" value="AU=20-119"/>
</dbReference>
<dbReference type="PDB" id="7ZUW">
    <property type="method" value="EM"/>
    <property type="resolution" value="4.30 A"/>
    <property type="chains" value="AU=20-119"/>
</dbReference>
<dbReference type="PDB" id="7ZUX">
    <property type="method" value="EM"/>
    <property type="resolution" value="2.50 A"/>
    <property type="chains" value="DU=20-119"/>
</dbReference>
<dbReference type="PDB" id="7ZW0">
    <property type="method" value="EM"/>
    <property type="resolution" value="2.40 A"/>
    <property type="chains" value="sJ=1-121"/>
</dbReference>
<dbReference type="PDB" id="8BN3">
    <property type="method" value="EM"/>
    <property type="resolution" value="2.40 A"/>
    <property type="chains" value="D0=15-121"/>
</dbReference>
<dbReference type="PDB" id="8BQD">
    <property type="method" value="EM"/>
    <property type="resolution" value="3.90 A"/>
    <property type="chains" value="J=20-119"/>
</dbReference>
<dbReference type="PDB" id="8BQX">
    <property type="method" value="EM"/>
    <property type="resolution" value="3.80 A"/>
    <property type="chains" value="J=20-119"/>
</dbReference>
<dbReference type="PDB" id="8CAH">
    <property type="method" value="EM"/>
    <property type="resolution" value="3.00 A"/>
    <property type="chains" value="K=1-121"/>
</dbReference>
<dbReference type="PDB" id="8CAS">
    <property type="method" value="EM"/>
    <property type="resolution" value="3.30 A"/>
    <property type="chains" value="L=1-121"/>
</dbReference>
<dbReference type="PDB" id="8CBJ">
    <property type="method" value="EM"/>
    <property type="resolution" value="3.80 A"/>
    <property type="chains" value="U=1-121"/>
</dbReference>
<dbReference type="PDB" id="8CCS">
    <property type="method" value="EM"/>
    <property type="resolution" value="1.97 A"/>
    <property type="chains" value="w=1-121"/>
</dbReference>
<dbReference type="PDB" id="8CDL">
    <property type="method" value="EM"/>
    <property type="resolution" value="2.72 A"/>
    <property type="chains" value="w=1-121"/>
</dbReference>
<dbReference type="PDB" id="8CDR">
    <property type="method" value="EM"/>
    <property type="resolution" value="2.04 A"/>
    <property type="chains" value="w=1-121"/>
</dbReference>
<dbReference type="PDB" id="8K2D">
    <property type="method" value="EM"/>
    <property type="resolution" value="3.20 A"/>
    <property type="chains" value="SU=1-121"/>
</dbReference>
<dbReference type="PDB" id="8K82">
    <property type="method" value="EM"/>
    <property type="resolution" value="3.00 A"/>
    <property type="chains" value="SU=1-121"/>
</dbReference>
<dbReference type="PDB" id="8P4V">
    <property type="method" value="X-ray"/>
    <property type="resolution" value="3.16 A"/>
    <property type="chains" value="V/d0=1-121"/>
</dbReference>
<dbReference type="PDB" id="8P9A">
    <property type="method" value="X-ray"/>
    <property type="resolution" value="2.90 A"/>
    <property type="chains" value="V/d0=1-121"/>
</dbReference>
<dbReference type="PDB" id="8T2X">
    <property type="method" value="EM"/>
    <property type="resolution" value="2.46 A"/>
    <property type="chains" value="BU=1-121"/>
</dbReference>
<dbReference type="PDB" id="8T2Y">
    <property type="method" value="EM"/>
    <property type="resolution" value="2.20 A"/>
    <property type="chains" value="BU=1-121"/>
</dbReference>
<dbReference type="PDB" id="8T2Z">
    <property type="method" value="EM"/>
    <property type="resolution" value="2.40 A"/>
    <property type="chains" value="BU=1-121"/>
</dbReference>
<dbReference type="PDB" id="8T30">
    <property type="method" value="EM"/>
    <property type="resolution" value="2.88 A"/>
    <property type="chains" value="BU=1-121"/>
</dbReference>
<dbReference type="PDB" id="8T3A">
    <property type="method" value="EM"/>
    <property type="resolution" value="2.86 A"/>
    <property type="chains" value="BU=1-121"/>
</dbReference>
<dbReference type="PDB" id="8T3B">
    <property type="method" value="EM"/>
    <property type="resolution" value="3.08 A"/>
    <property type="chains" value="BU=1-121"/>
</dbReference>
<dbReference type="PDB" id="8T3C">
    <property type="method" value="EM"/>
    <property type="resolution" value="3.86 A"/>
    <property type="chains" value="BU=1-121"/>
</dbReference>
<dbReference type="PDB" id="8T3D">
    <property type="method" value="EM"/>
    <property type="resolution" value="2.95 A"/>
    <property type="chains" value="BU=1-121"/>
</dbReference>
<dbReference type="PDB" id="8T3E">
    <property type="method" value="EM"/>
    <property type="resolution" value="3.04 A"/>
    <property type="chains" value="BU=1-121"/>
</dbReference>
<dbReference type="PDB" id="8T3F">
    <property type="method" value="EM"/>
    <property type="resolution" value="3.09 A"/>
    <property type="chains" value="BU=1-121"/>
</dbReference>
<dbReference type="PDB" id="8UT0">
    <property type="method" value="EM"/>
    <property type="resolution" value="3.22 A"/>
    <property type="chains" value="SJ=20-119"/>
</dbReference>
<dbReference type="PDB" id="8UTI">
    <property type="method" value="EM"/>
    <property type="resolution" value="3.13 A"/>
    <property type="chains" value="SJ=20-119"/>
</dbReference>
<dbReference type="PDB" id="8XU8">
    <property type="method" value="EM"/>
    <property type="resolution" value="3.40 A"/>
    <property type="chains" value="SJ=20-119"/>
</dbReference>
<dbReference type="PDB" id="8Y0U">
    <property type="method" value="EM"/>
    <property type="resolution" value="3.59 A"/>
    <property type="chains" value="SU=1-121"/>
</dbReference>
<dbReference type="PDB" id="8YLD">
    <property type="method" value="EM"/>
    <property type="resolution" value="3.90 A"/>
    <property type="chains" value="SJ=20-119"/>
</dbReference>
<dbReference type="PDB" id="8YLR">
    <property type="method" value="EM"/>
    <property type="resolution" value="3.90 A"/>
    <property type="chains" value="SJ=20-119"/>
</dbReference>
<dbReference type="PDB" id="8Z70">
    <property type="method" value="EM"/>
    <property type="resolution" value="3.20 A"/>
    <property type="chains" value="SJ=20-119"/>
</dbReference>
<dbReference type="PDB" id="8Z71">
    <property type="method" value="EM"/>
    <property type="resolution" value="3.60 A"/>
    <property type="chains" value="SJ=20-119"/>
</dbReference>
<dbReference type="PDB" id="9F9S">
    <property type="method" value="EM"/>
    <property type="resolution" value="2.90 A"/>
    <property type="chains" value="Ru/Su=1-121"/>
</dbReference>
<dbReference type="PDBsum" id="3J6X"/>
<dbReference type="PDBsum" id="3J6Y"/>
<dbReference type="PDBsum" id="3J77"/>
<dbReference type="PDBsum" id="3J78"/>
<dbReference type="PDBsum" id="4U3M"/>
<dbReference type="PDBsum" id="4U3N"/>
<dbReference type="PDBsum" id="4U3U"/>
<dbReference type="PDBsum" id="4U4N"/>
<dbReference type="PDBsum" id="4U4O"/>
<dbReference type="PDBsum" id="4U4Q"/>
<dbReference type="PDBsum" id="4U4R"/>
<dbReference type="PDBsum" id="4U4U"/>
<dbReference type="PDBsum" id="4U4Y"/>
<dbReference type="PDBsum" id="4U4Z"/>
<dbReference type="PDBsum" id="4U50"/>
<dbReference type="PDBsum" id="4U51"/>
<dbReference type="PDBsum" id="4U52"/>
<dbReference type="PDBsum" id="4U53"/>
<dbReference type="PDBsum" id="4U55"/>
<dbReference type="PDBsum" id="4U56"/>
<dbReference type="PDBsum" id="4U6F"/>
<dbReference type="PDBsum" id="4V4B"/>
<dbReference type="PDBsum" id="4V5Z"/>
<dbReference type="PDBsum" id="4V6I"/>
<dbReference type="PDBsum" id="4V7R"/>
<dbReference type="PDBsum" id="4V88"/>
<dbReference type="PDBsum" id="4V8Y"/>
<dbReference type="PDBsum" id="4V8Z"/>
<dbReference type="PDBsum" id="4V92"/>
<dbReference type="PDBsum" id="5DAT"/>
<dbReference type="PDBsum" id="5DC3"/>
<dbReference type="PDBsum" id="5DGE"/>
<dbReference type="PDBsum" id="5DGF"/>
<dbReference type="PDBsum" id="5DGV"/>
<dbReference type="PDBsum" id="5FCI"/>
<dbReference type="PDBsum" id="5FCJ"/>
<dbReference type="PDBsum" id="5I4L"/>
<dbReference type="PDBsum" id="5JUO"/>
<dbReference type="PDBsum" id="5JUP"/>
<dbReference type="PDBsum" id="5JUS"/>
<dbReference type="PDBsum" id="5JUT"/>
<dbReference type="PDBsum" id="5JUU"/>
<dbReference type="PDBsum" id="5LYB"/>
<dbReference type="PDBsum" id="5M1J"/>
<dbReference type="PDBsum" id="5MC6"/>
<dbReference type="PDBsum" id="5MEI"/>
<dbReference type="PDBsum" id="5NDG"/>
<dbReference type="PDBsum" id="5NDV"/>
<dbReference type="PDBsum" id="5NDW"/>
<dbReference type="PDBsum" id="5OBM"/>
<dbReference type="PDBsum" id="5ON6"/>
<dbReference type="PDBsum" id="5TBW"/>
<dbReference type="PDBsum" id="5TGA"/>
<dbReference type="PDBsum" id="5TGM"/>
<dbReference type="PDBsum" id="6FAI"/>
<dbReference type="PDBsum" id="6GQ1"/>
<dbReference type="PDBsum" id="6GQB"/>
<dbReference type="PDBsum" id="6GQV"/>
<dbReference type="PDBsum" id="6HHQ"/>
<dbReference type="PDBsum" id="6I7O"/>
<dbReference type="PDBsum" id="6Q8Y"/>
<dbReference type="PDBsum" id="6RBD"/>
<dbReference type="PDBsum" id="6RBE"/>
<dbReference type="PDBsum" id="6S47"/>
<dbReference type="PDBsum" id="6SNT"/>
<dbReference type="PDBsum" id="6SV4"/>
<dbReference type="PDBsum" id="6T4Q"/>
<dbReference type="PDBsum" id="6T7I"/>
<dbReference type="PDBsum" id="6T7T"/>
<dbReference type="PDBsum" id="6T83"/>
<dbReference type="PDBsum" id="6TB3"/>
<dbReference type="PDBsum" id="6TNU"/>
<dbReference type="PDBsum" id="6WDR"/>
<dbReference type="PDBsum" id="6WOO"/>
<dbReference type="PDBsum" id="6Y7C"/>
<dbReference type="PDBsum" id="6Z6J"/>
<dbReference type="PDBsum" id="6Z6K"/>
<dbReference type="PDBsum" id="6ZCE"/>
<dbReference type="PDBsum" id="6ZU9"/>
<dbReference type="PDBsum" id="6ZVI"/>
<dbReference type="PDBsum" id="7A1G"/>
<dbReference type="PDBsum" id="7B7D"/>
<dbReference type="PDBsum" id="7MPI"/>
<dbReference type="PDBsum" id="7MPJ"/>
<dbReference type="PDBsum" id="7N8B"/>
<dbReference type="PDBsum" id="7NRC"/>
<dbReference type="PDBsum" id="7NRD"/>
<dbReference type="PDBsum" id="7ZPQ"/>
<dbReference type="PDBsum" id="7ZRS"/>
<dbReference type="PDBsum" id="7ZUW"/>
<dbReference type="PDBsum" id="7ZUX"/>
<dbReference type="PDBsum" id="7ZW0"/>
<dbReference type="PDBsum" id="8BN3"/>
<dbReference type="PDBsum" id="8BQD"/>
<dbReference type="PDBsum" id="8BQX"/>
<dbReference type="PDBsum" id="8CAH"/>
<dbReference type="PDBsum" id="8CAS"/>
<dbReference type="PDBsum" id="8CBJ"/>
<dbReference type="PDBsum" id="8CCS"/>
<dbReference type="PDBsum" id="8CDL"/>
<dbReference type="PDBsum" id="8CDR"/>
<dbReference type="PDBsum" id="8K2D"/>
<dbReference type="PDBsum" id="8K82"/>
<dbReference type="PDBsum" id="8P4V"/>
<dbReference type="PDBsum" id="8P9A"/>
<dbReference type="PDBsum" id="8T2X"/>
<dbReference type="PDBsum" id="8T2Y"/>
<dbReference type="PDBsum" id="8T2Z"/>
<dbReference type="PDBsum" id="8T30"/>
<dbReference type="PDBsum" id="8T3A"/>
<dbReference type="PDBsum" id="8T3B"/>
<dbReference type="PDBsum" id="8T3C"/>
<dbReference type="PDBsum" id="8T3D"/>
<dbReference type="PDBsum" id="8T3E"/>
<dbReference type="PDBsum" id="8T3F"/>
<dbReference type="PDBsum" id="8UT0"/>
<dbReference type="PDBsum" id="8UTI"/>
<dbReference type="PDBsum" id="8XU8"/>
<dbReference type="PDBsum" id="8Y0U"/>
<dbReference type="PDBsum" id="8YLD"/>
<dbReference type="PDBsum" id="8YLR"/>
<dbReference type="PDBsum" id="8Z70"/>
<dbReference type="PDBsum" id="8Z71"/>
<dbReference type="PDBsum" id="9F9S"/>
<dbReference type="EMDB" id="EMD-0047"/>
<dbReference type="EMDB" id="EMD-0048"/>
<dbReference type="EMDB" id="EMD-0049"/>
<dbReference type="EMDB" id="EMD-10098"/>
<dbReference type="EMDB" id="EMD-10262"/>
<dbReference type="EMDB" id="EMD-10315"/>
<dbReference type="EMDB" id="EMD-10377"/>
<dbReference type="EMDB" id="EMD-10396"/>
<dbReference type="EMDB" id="EMD-10397"/>
<dbReference type="EMDB" id="EMD-10398"/>
<dbReference type="EMDB" id="EMD-10431"/>
<dbReference type="EMDB" id="EMD-10537"/>
<dbReference type="EMDB" id="EMD-10713"/>
<dbReference type="EMDB" id="EMD-11096"/>
<dbReference type="EMDB" id="EMD-11097"/>
<dbReference type="EMDB" id="EMD-11160"/>
<dbReference type="EMDB" id="EMD-11439"/>
<dbReference type="EMDB" id="EMD-11608"/>
<dbReference type="EMDB" id="EMD-12081"/>
<dbReference type="EMDB" id="EMD-12534"/>
<dbReference type="EMDB" id="EMD-12535"/>
<dbReference type="EMDB" id="EMD-14979"/>
<dbReference type="EMDB" id="EMD-14990"/>
<dbReference type="EMDB" id="EMD-16191"/>
<dbReference type="EMDB" id="EMD-16525"/>
<dbReference type="EMDB" id="EMD-16533"/>
<dbReference type="EMDB" id="EMD-16541"/>
<dbReference type="EMDB" id="EMD-21644"/>
<dbReference type="EMDB" id="EMD-21859"/>
<dbReference type="EMDB" id="EMD-23934"/>
<dbReference type="EMDB" id="EMD-23935"/>
<dbReference type="EMDB" id="EMD-24235"/>
<dbReference type="EMDB" id="EMD-3461"/>
<dbReference type="EMDB" id="EMD-36839"/>
<dbReference type="EMDB" id="EMD-36945"/>
<dbReference type="EMDB" id="EMD-38660"/>
<dbReference type="EMDB" id="EMD-4140"/>
<dbReference type="EMDB" id="EMD-4214"/>
<dbReference type="EMDB" id="EMD-4427"/>
<dbReference type="EMDB" id="EMD-4474"/>
<dbReference type="EMDB" id="EMD-4792"/>
<dbReference type="EMDB" id="EMD-4793"/>
<dbReference type="EMDB" id="EMD-50259"/>
<dbReference type="SMR" id="P38701"/>
<dbReference type="BioGRID" id="36408">
    <property type="interactions" value="721"/>
</dbReference>
<dbReference type="ComplexPortal" id="CPX-1599">
    <property type="entry name" value="40S cytosolic small ribosomal subunit"/>
</dbReference>
<dbReference type="DIP" id="DIP-4060N"/>
<dbReference type="FunCoup" id="P38701">
    <property type="interactions" value="1084"/>
</dbReference>
<dbReference type="IntAct" id="P38701">
    <property type="interactions" value="75"/>
</dbReference>
<dbReference type="MINT" id="P38701"/>
<dbReference type="STRING" id="4932.YHL015W"/>
<dbReference type="iPTMnet" id="P38701"/>
<dbReference type="PaxDb" id="4932-YHL015W"/>
<dbReference type="PeptideAtlas" id="P38701"/>
<dbReference type="TopDownProteomics" id="P38701"/>
<dbReference type="EnsemblFungi" id="YHL015W_mRNA">
    <property type="protein sequence ID" value="YHL015W"/>
    <property type="gene ID" value="YHL015W"/>
</dbReference>
<dbReference type="GeneID" id="856371"/>
<dbReference type="KEGG" id="sce:YHL015W"/>
<dbReference type="AGR" id="SGD:S000001007"/>
<dbReference type="SGD" id="S000001007">
    <property type="gene designation" value="RPS20"/>
</dbReference>
<dbReference type="VEuPathDB" id="FungiDB:YHL015W"/>
<dbReference type="eggNOG" id="KOG0900">
    <property type="taxonomic scope" value="Eukaryota"/>
</dbReference>
<dbReference type="GeneTree" id="ENSGT00390000003248"/>
<dbReference type="HOGENOM" id="CLU_122625_0_0_1"/>
<dbReference type="InParanoid" id="P38701"/>
<dbReference type="OMA" id="IHKRVIH"/>
<dbReference type="OrthoDB" id="10248551at2759"/>
<dbReference type="BioCyc" id="YEAST:G3O-31035-MONOMER"/>
<dbReference type="Reactome" id="R-SCE-156827">
    <property type="pathway name" value="L13a-mediated translational silencing of Ceruloplasmin expression"/>
</dbReference>
<dbReference type="Reactome" id="R-SCE-1799339">
    <property type="pathway name" value="SRP-dependent cotranslational protein targeting to membrane"/>
</dbReference>
<dbReference type="Reactome" id="R-SCE-72649">
    <property type="pathway name" value="Translation initiation complex formation"/>
</dbReference>
<dbReference type="Reactome" id="R-SCE-72689">
    <property type="pathway name" value="Formation of a pool of free 40S subunits"/>
</dbReference>
<dbReference type="Reactome" id="R-SCE-72695">
    <property type="pathway name" value="Formation of the ternary complex, and subsequently, the 43S complex"/>
</dbReference>
<dbReference type="Reactome" id="R-SCE-72702">
    <property type="pathway name" value="Ribosomal scanning and start codon recognition"/>
</dbReference>
<dbReference type="Reactome" id="R-SCE-72706">
    <property type="pathway name" value="GTP hydrolysis and joining of the 60S ribosomal subunit"/>
</dbReference>
<dbReference type="Reactome" id="R-SCE-975956">
    <property type="pathway name" value="Nonsense Mediated Decay (NMD) independent of the Exon Junction Complex (EJC)"/>
</dbReference>
<dbReference type="Reactome" id="R-SCE-975957">
    <property type="pathway name" value="Nonsense Mediated Decay (NMD) enhanced by the Exon Junction Complex (EJC)"/>
</dbReference>
<dbReference type="BioGRID-ORCS" id="856371">
    <property type="hits" value="5 hits in 10 CRISPR screens"/>
</dbReference>
<dbReference type="PRO" id="PR:P38701"/>
<dbReference type="Proteomes" id="UP000002311">
    <property type="component" value="Chromosome VIII"/>
</dbReference>
<dbReference type="RNAct" id="P38701">
    <property type="molecule type" value="protein"/>
</dbReference>
<dbReference type="GO" id="GO:0005737">
    <property type="term" value="C:cytoplasm"/>
    <property type="evidence" value="ECO:0000314"/>
    <property type="project" value="ComplexPortal"/>
</dbReference>
<dbReference type="GO" id="GO:0005829">
    <property type="term" value="C:cytosol"/>
    <property type="evidence" value="ECO:0000304"/>
    <property type="project" value="Reactome"/>
</dbReference>
<dbReference type="GO" id="GO:0022627">
    <property type="term" value="C:cytosolic small ribosomal subunit"/>
    <property type="evidence" value="ECO:0000314"/>
    <property type="project" value="SGD"/>
</dbReference>
<dbReference type="GO" id="GO:0003729">
    <property type="term" value="F:mRNA binding"/>
    <property type="evidence" value="ECO:0007005"/>
    <property type="project" value="SGD"/>
</dbReference>
<dbReference type="GO" id="GO:0003735">
    <property type="term" value="F:structural constituent of ribosome"/>
    <property type="evidence" value="ECO:0000318"/>
    <property type="project" value="GO_Central"/>
</dbReference>
<dbReference type="GO" id="GO:0002181">
    <property type="term" value="P:cytoplasmic translation"/>
    <property type="evidence" value="ECO:0000303"/>
    <property type="project" value="ComplexPortal"/>
</dbReference>
<dbReference type="GO" id="GO:0000462">
    <property type="term" value="P:maturation of SSU-rRNA from tricistronic rRNA transcript (SSU-rRNA, 5.8S rRNA, LSU-rRNA)"/>
    <property type="evidence" value="ECO:0000315"/>
    <property type="project" value="SGD"/>
</dbReference>
<dbReference type="FunFam" id="3.30.70.600:FF:000004">
    <property type="entry name" value="30S ribosomal protein S10"/>
    <property type="match status" value="1"/>
</dbReference>
<dbReference type="Gene3D" id="3.30.70.600">
    <property type="entry name" value="Ribosomal protein S10 domain"/>
    <property type="match status" value="1"/>
</dbReference>
<dbReference type="HAMAP" id="MF_00508">
    <property type="entry name" value="Ribosomal_uS10"/>
    <property type="match status" value="1"/>
</dbReference>
<dbReference type="InterPro" id="IPR001848">
    <property type="entry name" value="Ribosomal_uS10"/>
</dbReference>
<dbReference type="InterPro" id="IPR018268">
    <property type="entry name" value="Ribosomal_uS10_CS"/>
</dbReference>
<dbReference type="InterPro" id="IPR027486">
    <property type="entry name" value="Ribosomal_uS10_dom"/>
</dbReference>
<dbReference type="InterPro" id="IPR036838">
    <property type="entry name" value="Ribosomal_uS10_dom_sf"/>
</dbReference>
<dbReference type="InterPro" id="IPR005729">
    <property type="entry name" value="Ribosomal_uS10_euk/arc"/>
</dbReference>
<dbReference type="NCBIfam" id="TIGR01046">
    <property type="entry name" value="uS10_euk_arch"/>
    <property type="match status" value="1"/>
</dbReference>
<dbReference type="PANTHER" id="PTHR11700">
    <property type="entry name" value="30S RIBOSOMAL PROTEIN S10 FAMILY MEMBER"/>
    <property type="match status" value="1"/>
</dbReference>
<dbReference type="Pfam" id="PF00338">
    <property type="entry name" value="Ribosomal_S10"/>
    <property type="match status" value="1"/>
</dbReference>
<dbReference type="PRINTS" id="PR00971">
    <property type="entry name" value="RIBOSOMALS10"/>
</dbReference>
<dbReference type="SMART" id="SM01403">
    <property type="entry name" value="Ribosomal_S10"/>
    <property type="match status" value="1"/>
</dbReference>
<dbReference type="SUPFAM" id="SSF54999">
    <property type="entry name" value="Ribosomal protein S10"/>
    <property type="match status" value="1"/>
</dbReference>
<dbReference type="PROSITE" id="PS00361">
    <property type="entry name" value="RIBOSOMAL_S10"/>
    <property type="match status" value="1"/>
</dbReference>
<gene>
    <name evidence="10" type="primary">RPS20</name>
    <name evidence="9" type="synonym">URP2</name>
    <name evidence="14" type="ordered locus">YHL015W</name>
</gene>
<keyword id="KW-0002">3D-structure</keyword>
<keyword id="KW-0007">Acetylation</keyword>
<keyword id="KW-0963">Cytoplasm</keyword>
<keyword id="KW-0903">Direct protein sequencing</keyword>
<keyword id="KW-1017">Isopeptide bond</keyword>
<keyword id="KW-1185">Reference proteome</keyword>
<keyword id="KW-0687">Ribonucleoprotein</keyword>
<keyword id="KW-0689">Ribosomal protein</keyword>
<keyword id="KW-0832">Ubl conjugation</keyword>
<evidence type="ECO:0000269" key="1">
    <source>
    </source>
</evidence>
<evidence type="ECO:0000269" key="2">
    <source>
    </source>
</evidence>
<evidence type="ECO:0000269" key="3">
    <source>
    </source>
</evidence>
<evidence type="ECO:0000269" key="4">
    <source>
    </source>
</evidence>
<evidence type="ECO:0000269" key="5">
    <source>
    </source>
</evidence>
<evidence type="ECO:0000269" key="6">
    <source>
    </source>
</evidence>
<evidence type="ECO:0000269" key="7">
    <source ref="4"/>
</evidence>
<evidence type="ECO:0000303" key="8">
    <source>
    </source>
</evidence>
<evidence type="ECO:0000303" key="9">
    <source>
    </source>
</evidence>
<evidence type="ECO:0000303" key="10">
    <source>
    </source>
</evidence>
<evidence type="ECO:0000305" key="11"/>
<evidence type="ECO:0000305" key="12">
    <source>
    </source>
</evidence>
<evidence type="ECO:0000305" key="13">
    <source>
    </source>
</evidence>
<evidence type="ECO:0000312" key="14">
    <source>
        <dbReference type="SGD" id="S000001007"/>
    </source>
</evidence>
<evidence type="ECO:0007744" key="15">
    <source>
    </source>
</evidence>
<evidence type="ECO:0007744" key="16">
    <source>
    </source>
</evidence>
<evidence type="ECO:0007829" key="17">
    <source>
        <dbReference type="PDB" id="6ZVI"/>
    </source>
</evidence>
<evidence type="ECO:0007829" key="18">
    <source>
        <dbReference type="PDB" id="7A1G"/>
    </source>
</evidence>
<reference key="1">
    <citation type="journal article" date="1994" name="J. Mol. Biol.">
        <title>Suppression of yeast RNA polymerase III mutations by the URP2 gene encoding a protein homologous to the mammalian ribosomal protein S20.</title>
        <authorList>
            <person name="Hermann-Le Denmat S."/>
            <person name="Sipickzki M."/>
            <person name="Thuriaux P."/>
        </authorList>
    </citation>
    <scope>NUCLEOTIDE SEQUENCE [GENOMIC DNA]</scope>
    <source>
        <strain>ATCC 28383 / FL100 / VTT C-80102</strain>
    </source>
</reference>
<reference key="2">
    <citation type="journal article" date="1994" name="Science">
        <title>Complete nucleotide sequence of Saccharomyces cerevisiae chromosome VIII.</title>
        <authorList>
            <person name="Johnston M."/>
            <person name="Andrews S."/>
            <person name="Brinkman R."/>
            <person name="Cooper J."/>
            <person name="Ding H."/>
            <person name="Dover J."/>
            <person name="Du Z."/>
            <person name="Favello A."/>
            <person name="Fulton L."/>
            <person name="Gattung S."/>
            <person name="Geisel C."/>
            <person name="Kirsten J."/>
            <person name="Kucaba T."/>
            <person name="Hillier L.W."/>
            <person name="Jier M."/>
            <person name="Johnston L."/>
            <person name="Langston Y."/>
            <person name="Latreille P."/>
            <person name="Louis E.J."/>
            <person name="Macri C."/>
            <person name="Mardis E."/>
            <person name="Menezes S."/>
            <person name="Mouser L."/>
            <person name="Nhan M."/>
            <person name="Rifkin L."/>
            <person name="Riles L."/>
            <person name="St Peter H."/>
            <person name="Trevaskis E."/>
            <person name="Vaughan K."/>
            <person name="Vignati D."/>
            <person name="Wilcox L."/>
            <person name="Wohldman P."/>
            <person name="Waterston R."/>
            <person name="Wilson R."/>
            <person name="Vaudin M."/>
        </authorList>
    </citation>
    <scope>NUCLEOTIDE SEQUENCE [LARGE SCALE GENOMIC DNA]</scope>
    <source>
        <strain>ATCC 204508 / S288c</strain>
    </source>
</reference>
<reference key="3">
    <citation type="journal article" date="2014" name="G3 (Bethesda)">
        <title>The reference genome sequence of Saccharomyces cerevisiae: Then and now.</title>
        <authorList>
            <person name="Engel S.R."/>
            <person name="Dietrich F.S."/>
            <person name="Fisk D.G."/>
            <person name="Binkley G."/>
            <person name="Balakrishnan R."/>
            <person name="Costanzo M.C."/>
            <person name="Dwight S.S."/>
            <person name="Hitz B.C."/>
            <person name="Karra K."/>
            <person name="Nash R.S."/>
            <person name="Weng S."/>
            <person name="Wong E.D."/>
            <person name="Lloyd P."/>
            <person name="Skrzypek M.S."/>
            <person name="Miyasato S.R."/>
            <person name="Simison M."/>
            <person name="Cherry J.M."/>
        </authorList>
    </citation>
    <scope>GENOME REANNOTATION</scope>
    <source>
        <strain>ATCC 204508 / S288c</strain>
    </source>
</reference>
<reference key="4">
    <citation type="submission" date="2005-05" db="UniProtKB">
        <authorList>
            <person name="Bienvenut W.V."/>
            <person name="Peters C."/>
        </authorList>
    </citation>
    <scope>PROTEIN SEQUENCE OF 2-21; 33-43; 78-85 AND 90-102</scope>
    <scope>CLEAVAGE OF INITIATOR METHIONINE</scope>
    <scope>ACETYLATION AT SER-2</scope>
    <scope>IDENTIFICATION BY MASS SPECTROMETRY</scope>
</reference>
<reference key="5">
    <citation type="journal article" date="1998" name="Yeast">
        <title>The list of cytoplasmic ribosomal proteins of Saccharomyces cerevisiae.</title>
        <authorList>
            <person name="Planta R.J."/>
            <person name="Mager W.H."/>
        </authorList>
    </citation>
    <scope>NOMENCLATURE</scope>
    <scope>SUBUNIT</scope>
</reference>
<reference key="6">
    <citation type="journal article" date="1999" name="J. Biol. Chem.">
        <title>The action of N-terminal acetyltransferases on yeast ribosomal proteins.</title>
        <authorList>
            <person name="Arnold R.J."/>
            <person name="Polevoda B."/>
            <person name="Reilly J.P."/>
            <person name="Sherman F."/>
        </authorList>
    </citation>
    <scope>CLEAVAGE OF INITIATOR METHIONINE</scope>
    <scope>ACETYLATION AT SER-2 BY NATA</scope>
</reference>
<reference key="7">
    <citation type="journal article" date="2003" name="Nat. Biotechnol.">
        <title>A proteomics approach to understanding protein ubiquitination.</title>
        <authorList>
            <person name="Peng J."/>
            <person name="Schwartz D."/>
            <person name="Elias J.E."/>
            <person name="Thoreen C.C."/>
            <person name="Cheng D."/>
            <person name="Marsischky G."/>
            <person name="Roelofs J."/>
            <person name="Finley D."/>
            <person name="Gygi S.P."/>
        </authorList>
    </citation>
    <scope>UBIQUITINATION [LARGE SCALE ANALYSIS] AT LYS-8</scope>
    <scope>IDENTIFICATION BY MASS SPECTROMETRY</scope>
    <source>
        <strain>SUB592</strain>
    </source>
</reference>
<reference key="8">
    <citation type="journal article" date="2003" name="Proc. Natl. Acad. Sci. U.S.A.">
        <title>A subset of membrane-associated proteins is ubiquitinated in response to mutations in the endoplasmic reticulum degradation machinery.</title>
        <authorList>
            <person name="Hitchcock A.L."/>
            <person name="Auld K."/>
            <person name="Gygi S.P."/>
            <person name="Silver P.A."/>
        </authorList>
    </citation>
    <scope>UBIQUITINATION [LARGE SCALE ANALYSIS] AT LYS-8</scope>
    <scope>IDENTIFICATION BY MASS SPECTROMETRY</scope>
</reference>
<reference key="9">
    <citation type="journal article" date="2012" name="Proc. Natl. Acad. Sci. U.S.A.">
        <title>N-terminal acetylome analyses and functional insights of the N-terminal acetyltransferase NatB.</title>
        <authorList>
            <person name="Van Damme P."/>
            <person name="Lasa M."/>
            <person name="Polevoda B."/>
            <person name="Gazquez C."/>
            <person name="Elosegui-Artola A."/>
            <person name="Kim D.S."/>
            <person name="De Juan-Pardo E."/>
            <person name="Demeyer K."/>
            <person name="Hole K."/>
            <person name="Larrea E."/>
            <person name="Timmerman E."/>
            <person name="Prieto J."/>
            <person name="Arnesen T."/>
            <person name="Sherman F."/>
            <person name="Gevaert K."/>
            <person name="Aldabe R."/>
        </authorList>
    </citation>
    <scope>ACETYLATION [LARGE SCALE ANALYSIS] AT SER-2</scope>
    <scope>CLEAVAGE OF INITIATOR METHIONINE [LARGE SCALE ANALYSIS]</scope>
    <scope>IDENTIFICATION BY MASS SPECTROMETRY [LARGE SCALE ANALYSIS]</scope>
</reference>
<reference key="10">
    <citation type="journal article" date="2012" name="Proteomics">
        <title>Sites of ubiquitin attachment in Saccharomyces cerevisiae.</title>
        <authorList>
            <person name="Starita L.M."/>
            <person name="Lo R.S."/>
            <person name="Eng J.K."/>
            <person name="von Haller P.D."/>
            <person name="Fields S."/>
        </authorList>
    </citation>
    <scope>UBIQUITINATION [LARGE SCALE ANALYSIS] AT LYS-6; LYS-8; LYS-21; LYS-32 AND LYS-101</scope>
    <scope>IDENTIFICATION BY MASS SPECTROMETRY [LARGE SCALE ANALYSIS]</scope>
</reference>
<reference key="11">
    <citation type="journal article" date="2014" name="Curr. Opin. Struct. Biol.">
        <title>A new system for naming ribosomal proteins.</title>
        <authorList>
            <person name="Ban N."/>
            <person name="Beckmann R."/>
            <person name="Cate J.H.D."/>
            <person name="Dinman J.D."/>
            <person name="Dragon F."/>
            <person name="Ellis S.R."/>
            <person name="Lafontaine D.L.J."/>
            <person name="Lindahl L."/>
            <person name="Liljas A."/>
            <person name="Lipton J.M."/>
            <person name="McAlear M.A."/>
            <person name="Moore P.B."/>
            <person name="Noller H.F."/>
            <person name="Ortega J."/>
            <person name="Panse V.G."/>
            <person name="Ramakrishnan V."/>
            <person name="Spahn C.M.T."/>
            <person name="Steitz T.A."/>
            <person name="Tchorzewski M."/>
            <person name="Tollervey D."/>
            <person name="Warren A.J."/>
            <person name="Williamson J.R."/>
            <person name="Wilson D."/>
            <person name="Yonath A."/>
            <person name="Yusupov M."/>
        </authorList>
    </citation>
    <scope>NOMENCLATURE</scope>
</reference>
<reference key="12">
    <citation type="journal article" date="2017" name="Nat. Commun.">
        <title>Ubiquitination of stalled ribosome triggers ribosome-associated quality control.</title>
        <authorList>
            <person name="Matsuo Y."/>
            <person name="Ikeuchi K."/>
            <person name="Saeki Y."/>
            <person name="Iwasaki S."/>
            <person name="Schmidt C."/>
            <person name="Udagawa T."/>
            <person name="Sato F."/>
            <person name="Tsuchiya H."/>
            <person name="Becker T."/>
            <person name="Tanaka K."/>
            <person name="Ingolia N.T."/>
            <person name="Beckmann R."/>
            <person name="Inada T."/>
        </authorList>
    </citation>
    <scope>UBIQUITINATION AT LYS-6 AND LYS-8</scope>
    <scope>MUTAGENESIS OF 6-LYS--LYS-8</scope>
</reference>
<reference key="13">
    <citation type="journal article" date="2019" name="EMBO J.">
        <title>Collided ribosomes form a unique structural interface to induce Hel2-driven quality control pathways.</title>
        <authorList>
            <person name="Ikeuchi K."/>
            <person name="Tesina P."/>
            <person name="Matsuo Y."/>
            <person name="Sugiyama T."/>
            <person name="Cheng J."/>
            <person name="Saeki Y."/>
            <person name="Tanaka K."/>
            <person name="Becker T."/>
            <person name="Beckmann R."/>
            <person name="Inada T."/>
        </authorList>
    </citation>
    <scope>UBIQUITINATION AT LYS-6 AND LYS-8</scope>
</reference>
<reference key="14">
    <citation type="journal article" date="2019" name="Nat. Commun.">
        <title>Oxidation and alkylation stresses activate ribosome-quality control.</title>
        <authorList>
            <person name="Yan L.L."/>
            <person name="Simms C.L."/>
            <person name="McLoughlin F."/>
            <person name="Vierstra R.D."/>
            <person name="Zaher H.S."/>
        </authorList>
    </citation>
    <scope>UBIQUITINATION AT LYS-6 AND LYS-8</scope>
</reference>
<reference key="15">
    <citation type="journal article" date="2023" name="Nat. Commun.">
        <title>Decoding of the ubiquitin code for clearance of colliding ribosomes by the RQT complex.</title>
        <authorList>
            <person name="Matsuo Y."/>
            <person name="Uchihashi T."/>
            <person name="Inada T."/>
        </authorList>
    </citation>
    <scope>UBIQUITINATION</scope>
</reference>
<reference key="16">
    <citation type="journal article" date="2001" name="Cell">
        <title>Structure of the 80S ribosome from Saccharomyces cerevisiae -- tRNA-ribosome and subunit-subunit interactions.</title>
        <authorList>
            <person name="Spahn C.M.T."/>
            <person name="Beckmann R."/>
            <person name="Eswar N."/>
            <person name="Penczek P.A."/>
            <person name="Sali A."/>
            <person name="Blobel G."/>
            <person name="Frank J."/>
        </authorList>
    </citation>
    <scope>3D-STRUCTURE MODELING OF 21-117</scope>
    <scope>ELECTRON MICROSCOPY</scope>
</reference>
<reference key="17">
    <citation type="journal article" date="2004" name="EMBO J.">
        <title>Domain movements of elongation factor eEF2 and the eukaryotic 80S ribosome facilitate tRNA translocation.</title>
        <authorList>
            <person name="Spahn C.M.T."/>
            <person name="Gomez-Lorenzo M.G."/>
            <person name="Grassucci R.A."/>
            <person name="Joergensen R."/>
            <person name="Andersen G.R."/>
            <person name="Beckmann R."/>
            <person name="Penczek P.A."/>
            <person name="Ballesta J.P.G."/>
            <person name="Frank J."/>
        </authorList>
    </citation>
    <scope>3D-STRUCTURE MODELING OF 21-121</scope>
    <scope>ELECTRON MICROSCOPY</scope>
</reference>
<reference key="18">
    <citation type="journal article" date="2010" name="Science">
        <title>Crystal structure of the eukaryotic ribosome.</title>
        <authorList>
            <person name="Ben-Shem A."/>
            <person name="Jenner L."/>
            <person name="Yusupova G."/>
            <person name="Yusupov M."/>
        </authorList>
    </citation>
    <scope>X-RAY CRYSTALLOGRAPHY (4.00 ANGSTROMS) OF 80S RIBOSOME</scope>
</reference>
<reference key="19">
    <citation type="journal article" date="2011" name="Science">
        <title>The structure of the eukaryotic ribosome at 3.0 A resolution.</title>
        <authorList>
            <person name="Ben-Shem A."/>
            <person name="Garreau de Loubresse N."/>
            <person name="Melnikov S."/>
            <person name="Jenner L."/>
            <person name="Yusupova G."/>
            <person name="Yusupov M."/>
        </authorList>
    </citation>
    <scope>X-RAY CRYSTALLOGRAPHY (3.00 ANGSTROMS) OF 80S RIBOSOME</scope>
    <scope>SUBUNIT</scope>
    <scope>SUBCELLULAR LOCATION</scope>
</reference>
<comment type="function">
    <text evidence="12">Component of the ribosome, a large ribonucleoprotein complex responsible for the synthesis of proteins in the cell. The small ribosomal subunit (SSU) binds messenger RNAs (mRNAs) and translates the encoded message by selecting cognate aminoacyl-transfer RNA (tRNA) molecules. The large subunit (LSU) contains the ribosomal catalytic site termed the peptidyl transferase center (PTC), which catalyzes the formation of peptide bonds, thereby polymerizing the amino acids delivered by tRNAs into a polypeptide chain. The nascent polypeptides leave the ribosome through a tunnel in the LSU and interact with protein factors that function in enzymatic processing, targeting, and the membrane insertion of nascent chains at the exit of the ribosomal tunnel.</text>
</comment>
<comment type="subunit">
    <text evidence="2 13">Component of the small ribosomal subunit (SSU). Mature yeast ribosomes consist of a small (40S) and a large (60S) subunit. The 40S small subunit contains 1 molecule of ribosomal RNA (18S rRNA) and 33 different proteins (encoded by 57 genes). The large 60S subunit contains 3 rRNA molecules (25S, 5.8S and 5S rRNA) and 46 different proteins (encoded by 81 genes) (PubMed:22096102, PubMed:9559554).</text>
</comment>
<comment type="subcellular location">
    <subcellularLocation>
        <location evidence="2">Cytoplasm</location>
    </subcellularLocation>
</comment>
<comment type="PTM">
    <text evidence="3 4 5 6">Ubiquitinated at Lys-6 and Lys-8 by HEL2, to activate the ribosome quality control (RQC) pathway in response to stalled ribosomes.</text>
</comment>
<comment type="PTM">
    <text evidence="1 7">N-terminally acetylated by acetyltransferase NatA. Also partially acetylated by NatC.</text>
</comment>
<comment type="similarity">
    <text evidence="11">Belongs to the universal ribosomal protein uS10 family.</text>
</comment>
<feature type="initiator methionine" description="Removed" evidence="1 7 16">
    <location>
        <position position="1"/>
    </location>
</feature>
<feature type="chain" id="PRO_0000146692" description="Small ribosomal subunit protein uS10">
    <location>
        <begin position="2"/>
        <end position="121"/>
    </location>
</feature>
<feature type="modified residue" description="N-acetylserine" evidence="1 7 16">
    <location>
        <position position="2"/>
    </location>
</feature>
<feature type="cross-link" description="Glycyl lysine isopeptide (Lys-Gly) (interchain with G-Cter in ubiquitin)" evidence="3 4 5 15">
    <location>
        <position position="6"/>
    </location>
</feature>
<feature type="cross-link" description="Glycyl lysine isopeptide (Lys-Gly) (interchain with G-Cter in ubiquitin)" evidence="3 4 5 15">
    <location>
        <position position="8"/>
    </location>
</feature>
<feature type="cross-link" description="Glycyl lysine isopeptide (Lys-Gly) (interchain with G-Cter in ubiquitin)" evidence="15">
    <location>
        <position position="21"/>
    </location>
</feature>
<feature type="cross-link" description="Glycyl lysine isopeptide (Lys-Gly) (interchain with G-Cter in ubiquitin)" evidence="15">
    <location>
        <position position="32"/>
    </location>
</feature>
<feature type="cross-link" description="Glycyl lysine isopeptide (Lys-Gly) (interchain with G-Cter in ubiquitin)" evidence="15">
    <location>
        <position position="101"/>
    </location>
</feature>
<feature type="mutagenesis site" description="Abolishes ubiquitination by HEL2. Defective activation of the ribosome quality control (RQC) pathway. Sensitive to anisomycin (stalls ribosomes in the rotated state)." evidence="3">
    <original>KEK</original>
    <variation>RER</variation>
    <location>
        <begin position="6"/>
        <end position="8"/>
    </location>
</feature>
<feature type="strand" evidence="17">
    <location>
        <begin position="23"/>
        <end position="29"/>
    </location>
</feature>
<feature type="helix" evidence="17">
    <location>
        <begin position="31"/>
        <end position="47"/>
    </location>
</feature>
<feature type="strand" evidence="18">
    <location>
        <begin position="52"/>
        <end position="57"/>
    </location>
</feature>
<feature type="strand" evidence="17">
    <location>
        <begin position="61"/>
        <end position="65"/>
    </location>
</feature>
<feature type="strand" evidence="17">
    <location>
        <begin position="69"/>
        <end position="73"/>
    </location>
</feature>
<feature type="strand" evidence="17">
    <location>
        <begin position="82"/>
        <end position="91"/>
    </location>
</feature>
<feature type="helix" evidence="17">
    <location>
        <begin position="97"/>
        <end position="106"/>
    </location>
</feature>
<feature type="strand" evidence="17">
    <location>
        <begin position="112"/>
        <end position="117"/>
    </location>
</feature>